<protein>
    <recommendedName>
        <fullName>Uncharacterized protein MG415</fullName>
    </recommendedName>
</protein>
<keyword id="KW-1003">Cell membrane</keyword>
<keyword id="KW-0472">Membrane</keyword>
<keyword id="KW-1185">Reference proteome</keyword>
<keyword id="KW-0732">Signal</keyword>
<keyword id="KW-0812">Transmembrane</keyword>
<keyword id="KW-1133">Transmembrane helix</keyword>
<gene>
    <name type="ordered locus">MG415</name>
    <name type="ORF">MG_525</name>
</gene>
<name>Y415_MYCGE</name>
<reference key="1">
    <citation type="journal article" date="1995" name="Science">
        <title>The minimal gene complement of Mycoplasma genitalium.</title>
        <authorList>
            <person name="Fraser C.M."/>
            <person name="Gocayne J.D."/>
            <person name="White O."/>
            <person name="Adams M.D."/>
            <person name="Clayton R.A."/>
            <person name="Fleischmann R.D."/>
            <person name="Bult C.J."/>
            <person name="Kerlavage A.R."/>
            <person name="Sutton G.G."/>
            <person name="Kelley J.M."/>
            <person name="Fritchman J.L."/>
            <person name="Weidman J.F."/>
            <person name="Small K.V."/>
            <person name="Sandusky M."/>
            <person name="Fuhrmann J.L."/>
            <person name="Nguyen D.T."/>
            <person name="Utterback T.R."/>
            <person name="Saudek D.M."/>
            <person name="Phillips C.A."/>
            <person name="Merrick J.M."/>
            <person name="Tomb J.-F."/>
            <person name="Dougherty B.A."/>
            <person name="Bott K.F."/>
            <person name="Hu P.-C."/>
            <person name="Lucier T.S."/>
            <person name="Peterson S.N."/>
            <person name="Smith H.O."/>
            <person name="Hutchison C.A. III"/>
            <person name="Venter J.C."/>
        </authorList>
    </citation>
    <scope>NUCLEOTIDE SEQUENCE [LARGE SCALE GENOMIC DNA]</scope>
    <source>
        <strain>ATCC 33530 / DSM 19775 / NCTC 10195 / G37</strain>
    </source>
</reference>
<reference key="2">
    <citation type="submission" date="2005-09" db="EMBL/GenBank/DDBJ databases">
        <authorList>
            <person name="Fraser C.M."/>
            <person name="Gocayne J.D."/>
            <person name="White O."/>
            <person name="Adams M.D."/>
            <person name="Clayton R.A."/>
            <person name="Fleischmann R.D."/>
            <person name="Bult C.J."/>
            <person name="Kerlavage A.R."/>
            <person name="Sutton G.G."/>
            <person name="Kelley J.M."/>
            <person name="Fritchman J.L."/>
            <person name="Weidman J.F."/>
            <person name="Small K.V."/>
            <person name="Sandusky M."/>
            <person name="Fuhrmann J.L."/>
            <person name="Nguyen D.T."/>
            <person name="Utterback T.R."/>
            <person name="Saudek D.M."/>
            <person name="Phillips C.A."/>
            <person name="Merrick J.M."/>
            <person name="Tomb J.-F."/>
            <person name="Dougherty B.A."/>
            <person name="Bott K.F."/>
            <person name="Hu P.-C."/>
            <person name="Lucier T.S."/>
            <person name="Peterson S.N."/>
            <person name="Smith H.O."/>
            <person name="Hutchison C.A. III"/>
            <person name="Venter J.C."/>
        </authorList>
    </citation>
    <scope>SEQUENCE REVISION</scope>
</reference>
<organism>
    <name type="scientific">Mycoplasma genitalium (strain ATCC 33530 / DSM 19775 / NCTC 10195 / G37)</name>
    <name type="common">Mycoplasmoides genitalium</name>
    <dbReference type="NCBI Taxonomy" id="243273"/>
    <lineage>
        <taxon>Bacteria</taxon>
        <taxon>Bacillati</taxon>
        <taxon>Mycoplasmatota</taxon>
        <taxon>Mycoplasmoidales</taxon>
        <taxon>Mycoplasmoidaceae</taxon>
        <taxon>Mycoplasmoides</taxon>
    </lineage>
</organism>
<accession>P47655</accession>
<accession>Q2MHS8</accession>
<dbReference type="EMBL" id="L43967">
    <property type="protein sequence ID" value="ABC59634.1"/>
    <property type="molecule type" value="Genomic_DNA"/>
</dbReference>
<dbReference type="PIR" id="I64245">
    <property type="entry name" value="I64245"/>
</dbReference>
<dbReference type="RefSeq" id="WP_010869474.1">
    <property type="nucleotide sequence ID" value="NC_000908.2"/>
</dbReference>
<dbReference type="SMR" id="P47655"/>
<dbReference type="STRING" id="243273.MG_525"/>
<dbReference type="GeneID" id="88282599"/>
<dbReference type="KEGG" id="mge:MG_525"/>
<dbReference type="eggNOG" id="ENOG5031ZAC">
    <property type="taxonomic scope" value="Bacteria"/>
</dbReference>
<dbReference type="HOGENOM" id="CLU_413228_0_0_14"/>
<dbReference type="InParanoid" id="P47655"/>
<dbReference type="OrthoDB" id="10008859at2"/>
<dbReference type="BioCyc" id="MGEN243273:G1GJ2-511-MONOMER"/>
<dbReference type="Proteomes" id="UP000000807">
    <property type="component" value="Chromosome"/>
</dbReference>
<dbReference type="GO" id="GO:0005886">
    <property type="term" value="C:plasma membrane"/>
    <property type="evidence" value="ECO:0007669"/>
    <property type="project" value="UniProtKB-SubCell"/>
</dbReference>
<comment type="subcellular location">
    <subcellularLocation>
        <location evidence="2">Cell membrane</location>
        <topology evidence="2">Single-pass membrane protein</topology>
    </subcellularLocation>
</comment>
<comment type="similarity">
    <text evidence="2">Belongs to the MG414/MG415 family.</text>
</comment>
<proteinExistence type="inferred from homology"/>
<sequence>MSWKRYLKWVSFAIIPLLFANTSIKSKLIDTNLYLVKDDFQSQNQLTIATNQLAKIIVNQIEFDSNSLIANPTTVLNKELIGSKITPKLKFSDQFSNAIEMVSKLNQEFDQLANKDKTFFQFALDLLEKQEESKFDFEPKDERIDAIFFLSNLININPKQEKTLNFIRILPNLIKSIFKDTTITINIKIGGKNKVITFIENGSNVFLLSDVENFLNADQTGINFYEIEFLTFDFIVVNKTGWTLKNQPVDSFFKSVKNLPSIQKTKNGFQYSLKFRSEYNEHHILKDHFLIPIVTNQKNFSVNDIEKNGLNSYQREQITYAIKNSFTSQKENNLNISSATIKYIKDPEKLIKKSLIKPSVKNGIFYVSAQIINSNDLTKWGSKNDSEIIKDKMYFLEQNKNFPAIRTYLFQMRTKKLVLNVNDIWFKSSGDKLRVIVNNVEIDEFNPKENNTSFFESYEVHINDYFSLANKELLIKKLNLALSEMNLLIDKKKSSLDLFPKEIKLTTLKINSSLHFYLNVDAIKNQLNIEVNISKNRLTSLVYDIAIKNENELQIRTTNNYLNKYIWFDLDKKNNQKLKNELKLFLSLKKFQFKKEPNFSLKKNSYSFQIDKIIQSNSEDKKTDIIVYLIIGFSVLVLFITVFIYFHKWNKKQKMIKNKTRDNF</sequence>
<evidence type="ECO:0000255" key="1"/>
<evidence type="ECO:0000305" key="2"/>
<feature type="signal peptide" evidence="1">
    <location>
        <begin position="1"/>
        <end position="25"/>
    </location>
</feature>
<feature type="chain" id="PRO_0000210600" description="Uncharacterized protein MG415">
    <location>
        <begin position="26"/>
        <end position="664"/>
    </location>
</feature>
<feature type="transmembrane region" description="Helical" evidence="1">
    <location>
        <begin position="625"/>
        <end position="645"/>
    </location>
</feature>